<protein>
    <recommendedName>
        <fullName>Centromere protein S</fullName>
        <shortName>CENP-S</shortName>
    </recommendedName>
    <alternativeName>
        <fullName>Apoptosis-inducing TAF9-like domain-containing protein 1 homolog</fullName>
    </alternativeName>
    <alternativeName>
        <fullName>FANCM-interacting histone fold protein 1</fullName>
    </alternativeName>
</protein>
<organism>
    <name type="scientific">Mus musculus</name>
    <name type="common">Mouse</name>
    <dbReference type="NCBI Taxonomy" id="10090"/>
    <lineage>
        <taxon>Eukaryota</taxon>
        <taxon>Metazoa</taxon>
        <taxon>Chordata</taxon>
        <taxon>Craniata</taxon>
        <taxon>Vertebrata</taxon>
        <taxon>Euteleostomi</taxon>
        <taxon>Mammalia</taxon>
        <taxon>Eutheria</taxon>
        <taxon>Euarchontoglires</taxon>
        <taxon>Glires</taxon>
        <taxon>Rodentia</taxon>
        <taxon>Myomorpha</taxon>
        <taxon>Muroidea</taxon>
        <taxon>Muridae</taxon>
        <taxon>Murinae</taxon>
        <taxon>Mus</taxon>
        <taxon>Mus</taxon>
    </lineage>
</organism>
<feature type="chain" id="PRO_0000249478" description="Centromere protein S">
    <location>
        <begin position="1"/>
        <end position="142"/>
    </location>
</feature>
<feature type="region of interest" description="Disordered" evidence="2">
    <location>
        <begin position="107"/>
        <end position="142"/>
    </location>
</feature>
<feature type="compositionally biased region" description="Basic and acidic residues" evidence="2">
    <location>
        <begin position="116"/>
        <end position="128"/>
    </location>
</feature>
<feature type="compositionally biased region" description="Acidic residues" evidence="2">
    <location>
        <begin position="129"/>
        <end position="142"/>
    </location>
</feature>
<feature type="splice variant" id="VSP_020435" description="In isoform 2." evidence="3">
    <original>HAKRSTV</original>
    <variation>WVEKLAV</variation>
    <location>
        <begin position="70"/>
        <end position="76"/>
    </location>
</feature>
<feature type="splice variant" id="VSP_020436" description="In isoform 2." evidence="3">
    <location>
        <begin position="77"/>
        <end position="142"/>
    </location>
</feature>
<accession>Q9D084</accession>
<accession>A2AH77</accession>
<accession>Q80ZS2</accession>
<accession>Q8BH28</accession>
<evidence type="ECO:0000250" key="1">
    <source>
        <dbReference type="UniProtKB" id="Q8N2Z9"/>
    </source>
</evidence>
<evidence type="ECO:0000256" key="2">
    <source>
        <dbReference type="SAM" id="MobiDB-lite"/>
    </source>
</evidence>
<evidence type="ECO:0000303" key="3">
    <source>
    </source>
</evidence>
<evidence type="ECO:0000305" key="4"/>
<name>CENPS_MOUSE</name>
<gene>
    <name type="primary">Cenps</name>
    <name type="synonym">Apitd1</name>
    <name type="synonym">FAAP16</name>
    <name type="synonym">MHF1</name>
</gene>
<dbReference type="EMBL" id="AK011725">
    <property type="protein sequence ID" value="BAB27801.1"/>
    <property type="molecule type" value="mRNA"/>
</dbReference>
<dbReference type="EMBL" id="AK012995">
    <property type="protein sequence ID" value="BAC25385.1"/>
    <property type="status" value="ALT_FRAME"/>
    <property type="molecule type" value="mRNA"/>
</dbReference>
<dbReference type="EMBL" id="AK013038">
    <property type="protein sequence ID" value="BAC25387.1"/>
    <property type="status" value="ALT_FRAME"/>
    <property type="molecule type" value="mRNA"/>
</dbReference>
<dbReference type="EMBL" id="AL731655">
    <property type="status" value="NOT_ANNOTATED_CDS"/>
    <property type="molecule type" value="Genomic_DNA"/>
</dbReference>
<dbReference type="EMBL" id="BC048521">
    <property type="protein sequence ID" value="AAH48521.1"/>
    <property type="molecule type" value="mRNA"/>
</dbReference>
<dbReference type="CCDS" id="CCDS18954.1">
    <molecule id="Q9D084-1"/>
</dbReference>
<dbReference type="RefSeq" id="NP_081539.1">
    <molecule id="Q9D084-1"/>
    <property type="nucleotide sequence ID" value="NM_027263.2"/>
</dbReference>
<dbReference type="SMR" id="Q9D084"/>
<dbReference type="BioGRID" id="213761">
    <property type="interactions" value="4"/>
</dbReference>
<dbReference type="ComplexPortal" id="CPX-5704">
    <property type="entry name" value="Kinetochore CCAN complex"/>
</dbReference>
<dbReference type="FunCoup" id="Q9D084">
    <property type="interactions" value="583"/>
</dbReference>
<dbReference type="STRING" id="10090.ENSMUSP00000030813"/>
<dbReference type="PhosphoSitePlus" id="Q9D084"/>
<dbReference type="PaxDb" id="10090-ENSMUSP00000030813"/>
<dbReference type="ProteomicsDB" id="281583">
    <molecule id="Q9D084-1"/>
</dbReference>
<dbReference type="ProteomicsDB" id="281584">
    <molecule id="Q9D084-2"/>
</dbReference>
<dbReference type="Pumba" id="Q9D084"/>
<dbReference type="Antibodypedia" id="34792">
    <property type="antibodies" value="86 antibodies from 19 providers"/>
</dbReference>
<dbReference type="DNASU" id="69928"/>
<dbReference type="Ensembl" id="ENSMUST00000030813.10">
    <molecule id="Q9D084-1"/>
    <property type="protein sequence ID" value="ENSMUSP00000030813.4"/>
    <property type="gene ID" value="ENSMUSG00000073705.11"/>
</dbReference>
<dbReference type="Ensembl" id="ENSMUST00000105695.2">
    <molecule id="Q9D084-2"/>
    <property type="protein sequence ID" value="ENSMUSP00000101320.2"/>
    <property type="gene ID" value="ENSMUSG00000073705.11"/>
</dbReference>
<dbReference type="GeneID" id="69928"/>
<dbReference type="KEGG" id="mmu:69928"/>
<dbReference type="UCSC" id="uc008vvt.2">
    <molecule id="Q9D084-1"/>
    <property type="organism name" value="mouse"/>
</dbReference>
<dbReference type="UCSC" id="uc008vvu.2">
    <molecule id="Q9D084-2"/>
    <property type="organism name" value="mouse"/>
</dbReference>
<dbReference type="AGR" id="MGI:1917178"/>
<dbReference type="CTD" id="378708"/>
<dbReference type="MGI" id="MGI:1917178">
    <property type="gene designation" value="Cenps"/>
</dbReference>
<dbReference type="VEuPathDB" id="HostDB:ENSMUSG00000073705"/>
<dbReference type="eggNOG" id="ENOG502S62X">
    <property type="taxonomic scope" value="Eukaryota"/>
</dbReference>
<dbReference type="GeneTree" id="ENSGT00510000048007"/>
<dbReference type="HOGENOM" id="CLU_100369_0_0_1"/>
<dbReference type="InParanoid" id="Q9D084"/>
<dbReference type="OMA" id="WTQIENV"/>
<dbReference type="OrthoDB" id="1872155at2759"/>
<dbReference type="PhylomeDB" id="Q9D084"/>
<dbReference type="TreeFam" id="TF300253"/>
<dbReference type="Reactome" id="R-MMU-141444">
    <property type="pathway name" value="Amplification of signal from unattached kinetochores via a MAD2 inhibitory signal"/>
</dbReference>
<dbReference type="Reactome" id="R-MMU-2467813">
    <property type="pathway name" value="Separation of Sister Chromatids"/>
</dbReference>
<dbReference type="Reactome" id="R-MMU-2500257">
    <property type="pathway name" value="Resolution of Sister Chromatid Cohesion"/>
</dbReference>
<dbReference type="Reactome" id="R-MMU-5663220">
    <property type="pathway name" value="RHO GTPases Activate Formins"/>
</dbReference>
<dbReference type="Reactome" id="R-MMU-606279">
    <property type="pathway name" value="Deposition of new CENPA-containing nucleosomes at the centromere"/>
</dbReference>
<dbReference type="Reactome" id="R-MMU-6783310">
    <property type="pathway name" value="Fanconi Anemia Pathway"/>
</dbReference>
<dbReference type="Reactome" id="R-MMU-68877">
    <property type="pathway name" value="Mitotic Prometaphase"/>
</dbReference>
<dbReference type="Reactome" id="R-MMU-9648025">
    <property type="pathway name" value="EML4 and NUDC in mitotic spindle formation"/>
</dbReference>
<dbReference type="Reactome" id="R-MMU-9833482">
    <property type="pathway name" value="PKR-mediated signaling"/>
</dbReference>
<dbReference type="BioGRID-ORCS" id="69928">
    <property type="hits" value="8 hits in 114 CRISPR screens"/>
</dbReference>
<dbReference type="ChiTaRS" id="Cenps">
    <property type="organism name" value="mouse"/>
</dbReference>
<dbReference type="PRO" id="PR:Q9D084"/>
<dbReference type="Proteomes" id="UP000000589">
    <property type="component" value="Chromosome 4"/>
</dbReference>
<dbReference type="RNAct" id="Q9D084">
    <property type="molecule type" value="protein"/>
</dbReference>
<dbReference type="Bgee" id="ENSMUSG00000073705">
    <property type="expression patterns" value="Expressed in basioccipital bone and 164 other cell types or tissues"/>
</dbReference>
<dbReference type="ExpressionAtlas" id="Q9D084">
    <property type="expression patterns" value="baseline and differential"/>
</dbReference>
<dbReference type="GO" id="GO:0000785">
    <property type="term" value="C:chromatin"/>
    <property type="evidence" value="ECO:0007669"/>
    <property type="project" value="Ensembl"/>
</dbReference>
<dbReference type="GO" id="GO:0071821">
    <property type="term" value="C:FANCM-MHF complex"/>
    <property type="evidence" value="ECO:0000250"/>
    <property type="project" value="UniProtKB"/>
</dbReference>
<dbReference type="GO" id="GO:0043240">
    <property type="term" value="C:Fanconi anaemia nuclear complex"/>
    <property type="evidence" value="ECO:0000250"/>
    <property type="project" value="UniProtKB"/>
</dbReference>
<dbReference type="GO" id="GO:0000939">
    <property type="term" value="C:inner kinetochore"/>
    <property type="evidence" value="ECO:0000266"/>
    <property type="project" value="ComplexPortal"/>
</dbReference>
<dbReference type="GO" id="GO:0005634">
    <property type="term" value="C:nucleus"/>
    <property type="evidence" value="ECO:0000303"/>
    <property type="project" value="ComplexPortal"/>
</dbReference>
<dbReference type="GO" id="GO:0003682">
    <property type="term" value="F:chromatin binding"/>
    <property type="evidence" value="ECO:0000250"/>
    <property type="project" value="UniProtKB"/>
</dbReference>
<dbReference type="GO" id="GO:0003677">
    <property type="term" value="F:DNA binding"/>
    <property type="evidence" value="ECO:0000250"/>
    <property type="project" value="UniProtKB"/>
</dbReference>
<dbReference type="GO" id="GO:0003690">
    <property type="term" value="F:double-stranded DNA binding"/>
    <property type="evidence" value="ECO:0007669"/>
    <property type="project" value="Ensembl"/>
</dbReference>
<dbReference type="GO" id="GO:0046982">
    <property type="term" value="F:protein heterodimerization activity"/>
    <property type="evidence" value="ECO:0007669"/>
    <property type="project" value="InterPro"/>
</dbReference>
<dbReference type="GO" id="GO:0051301">
    <property type="term" value="P:cell division"/>
    <property type="evidence" value="ECO:0007669"/>
    <property type="project" value="UniProtKB-KW"/>
</dbReference>
<dbReference type="GO" id="GO:0007059">
    <property type="term" value="P:chromosome segregation"/>
    <property type="evidence" value="ECO:0000303"/>
    <property type="project" value="ComplexPortal"/>
</dbReference>
<dbReference type="GO" id="GO:0006974">
    <property type="term" value="P:DNA damage response"/>
    <property type="evidence" value="ECO:0000250"/>
    <property type="project" value="UniProtKB"/>
</dbReference>
<dbReference type="GO" id="GO:0006281">
    <property type="term" value="P:DNA repair"/>
    <property type="evidence" value="ECO:0000250"/>
    <property type="project" value="UniProtKB"/>
</dbReference>
<dbReference type="GO" id="GO:0036297">
    <property type="term" value="P:interstrand cross-link repair"/>
    <property type="evidence" value="ECO:0007669"/>
    <property type="project" value="Ensembl"/>
</dbReference>
<dbReference type="GO" id="GO:0031297">
    <property type="term" value="P:replication fork processing"/>
    <property type="evidence" value="ECO:0000250"/>
    <property type="project" value="UniProtKB"/>
</dbReference>
<dbReference type="GO" id="GO:0000712">
    <property type="term" value="P:resolution of meiotic recombination intermediates"/>
    <property type="evidence" value="ECO:0000250"/>
    <property type="project" value="UniProtKB"/>
</dbReference>
<dbReference type="CDD" id="cd22919">
    <property type="entry name" value="HFD_CENP-S"/>
    <property type="match status" value="1"/>
</dbReference>
<dbReference type="FunFam" id="1.10.20.10:FF:000063">
    <property type="entry name" value="Centromere protein S"/>
    <property type="match status" value="1"/>
</dbReference>
<dbReference type="Gene3D" id="1.10.20.10">
    <property type="entry name" value="Histone, subunit A"/>
    <property type="match status" value="1"/>
</dbReference>
<dbReference type="InterPro" id="IPR029003">
    <property type="entry name" value="CENP-S/Mhf1"/>
</dbReference>
<dbReference type="InterPro" id="IPR009072">
    <property type="entry name" value="Histone-fold"/>
</dbReference>
<dbReference type="PANTHER" id="PTHR22980:SF0">
    <property type="entry name" value="CENTROMERE PROTEIN S"/>
    <property type="match status" value="1"/>
</dbReference>
<dbReference type="PANTHER" id="PTHR22980">
    <property type="entry name" value="CORTISTATIN"/>
    <property type="match status" value="1"/>
</dbReference>
<dbReference type="Pfam" id="PF15630">
    <property type="entry name" value="CENP-S"/>
    <property type="match status" value="1"/>
</dbReference>
<dbReference type="SUPFAM" id="SSF47113">
    <property type="entry name" value="Histone-fold"/>
    <property type="match status" value="1"/>
</dbReference>
<keyword id="KW-0025">Alternative splicing</keyword>
<keyword id="KW-0131">Cell cycle</keyword>
<keyword id="KW-0132">Cell division</keyword>
<keyword id="KW-0137">Centromere</keyword>
<keyword id="KW-0158">Chromosome</keyword>
<keyword id="KW-0227">DNA damage</keyword>
<keyword id="KW-0234">DNA repair</keyword>
<keyword id="KW-0238">DNA-binding</keyword>
<keyword id="KW-0995">Kinetochore</keyword>
<keyword id="KW-0498">Mitosis</keyword>
<keyword id="KW-0539">Nucleus</keyword>
<keyword id="KW-1185">Reference proteome</keyword>
<reference key="1">
    <citation type="journal article" date="2005" name="Science">
        <title>The transcriptional landscape of the mammalian genome.</title>
        <authorList>
            <person name="Carninci P."/>
            <person name="Kasukawa T."/>
            <person name="Katayama S."/>
            <person name="Gough J."/>
            <person name="Frith M.C."/>
            <person name="Maeda N."/>
            <person name="Oyama R."/>
            <person name="Ravasi T."/>
            <person name="Lenhard B."/>
            <person name="Wells C."/>
            <person name="Kodzius R."/>
            <person name="Shimokawa K."/>
            <person name="Bajic V.B."/>
            <person name="Brenner S.E."/>
            <person name="Batalov S."/>
            <person name="Forrest A.R."/>
            <person name="Zavolan M."/>
            <person name="Davis M.J."/>
            <person name="Wilming L.G."/>
            <person name="Aidinis V."/>
            <person name="Allen J.E."/>
            <person name="Ambesi-Impiombato A."/>
            <person name="Apweiler R."/>
            <person name="Aturaliya R.N."/>
            <person name="Bailey T.L."/>
            <person name="Bansal M."/>
            <person name="Baxter L."/>
            <person name="Beisel K.W."/>
            <person name="Bersano T."/>
            <person name="Bono H."/>
            <person name="Chalk A.M."/>
            <person name="Chiu K.P."/>
            <person name="Choudhary V."/>
            <person name="Christoffels A."/>
            <person name="Clutterbuck D.R."/>
            <person name="Crowe M.L."/>
            <person name="Dalla E."/>
            <person name="Dalrymple B.P."/>
            <person name="de Bono B."/>
            <person name="Della Gatta G."/>
            <person name="di Bernardo D."/>
            <person name="Down T."/>
            <person name="Engstrom P."/>
            <person name="Fagiolini M."/>
            <person name="Faulkner G."/>
            <person name="Fletcher C.F."/>
            <person name="Fukushima T."/>
            <person name="Furuno M."/>
            <person name="Futaki S."/>
            <person name="Gariboldi M."/>
            <person name="Georgii-Hemming P."/>
            <person name="Gingeras T.R."/>
            <person name="Gojobori T."/>
            <person name="Green R.E."/>
            <person name="Gustincich S."/>
            <person name="Harbers M."/>
            <person name="Hayashi Y."/>
            <person name="Hensch T.K."/>
            <person name="Hirokawa N."/>
            <person name="Hill D."/>
            <person name="Huminiecki L."/>
            <person name="Iacono M."/>
            <person name="Ikeo K."/>
            <person name="Iwama A."/>
            <person name="Ishikawa T."/>
            <person name="Jakt M."/>
            <person name="Kanapin A."/>
            <person name="Katoh M."/>
            <person name="Kawasawa Y."/>
            <person name="Kelso J."/>
            <person name="Kitamura H."/>
            <person name="Kitano H."/>
            <person name="Kollias G."/>
            <person name="Krishnan S.P."/>
            <person name="Kruger A."/>
            <person name="Kummerfeld S.K."/>
            <person name="Kurochkin I.V."/>
            <person name="Lareau L.F."/>
            <person name="Lazarevic D."/>
            <person name="Lipovich L."/>
            <person name="Liu J."/>
            <person name="Liuni S."/>
            <person name="McWilliam S."/>
            <person name="Madan Babu M."/>
            <person name="Madera M."/>
            <person name="Marchionni L."/>
            <person name="Matsuda H."/>
            <person name="Matsuzawa S."/>
            <person name="Miki H."/>
            <person name="Mignone F."/>
            <person name="Miyake S."/>
            <person name="Morris K."/>
            <person name="Mottagui-Tabar S."/>
            <person name="Mulder N."/>
            <person name="Nakano N."/>
            <person name="Nakauchi H."/>
            <person name="Ng P."/>
            <person name="Nilsson R."/>
            <person name="Nishiguchi S."/>
            <person name="Nishikawa S."/>
            <person name="Nori F."/>
            <person name="Ohara O."/>
            <person name="Okazaki Y."/>
            <person name="Orlando V."/>
            <person name="Pang K.C."/>
            <person name="Pavan W.J."/>
            <person name="Pavesi G."/>
            <person name="Pesole G."/>
            <person name="Petrovsky N."/>
            <person name="Piazza S."/>
            <person name="Reed J."/>
            <person name="Reid J.F."/>
            <person name="Ring B.Z."/>
            <person name="Ringwald M."/>
            <person name="Rost B."/>
            <person name="Ruan Y."/>
            <person name="Salzberg S.L."/>
            <person name="Sandelin A."/>
            <person name="Schneider C."/>
            <person name="Schoenbach C."/>
            <person name="Sekiguchi K."/>
            <person name="Semple C.A."/>
            <person name="Seno S."/>
            <person name="Sessa L."/>
            <person name="Sheng Y."/>
            <person name="Shibata Y."/>
            <person name="Shimada H."/>
            <person name="Shimada K."/>
            <person name="Silva D."/>
            <person name="Sinclair B."/>
            <person name="Sperling S."/>
            <person name="Stupka E."/>
            <person name="Sugiura K."/>
            <person name="Sultana R."/>
            <person name="Takenaka Y."/>
            <person name="Taki K."/>
            <person name="Tammoja K."/>
            <person name="Tan S.L."/>
            <person name="Tang S."/>
            <person name="Taylor M.S."/>
            <person name="Tegner J."/>
            <person name="Teichmann S.A."/>
            <person name="Ueda H.R."/>
            <person name="van Nimwegen E."/>
            <person name="Verardo R."/>
            <person name="Wei C.L."/>
            <person name="Yagi K."/>
            <person name="Yamanishi H."/>
            <person name="Zabarovsky E."/>
            <person name="Zhu S."/>
            <person name="Zimmer A."/>
            <person name="Hide W."/>
            <person name="Bult C."/>
            <person name="Grimmond S.M."/>
            <person name="Teasdale R.D."/>
            <person name="Liu E.T."/>
            <person name="Brusic V."/>
            <person name="Quackenbush J."/>
            <person name="Wahlestedt C."/>
            <person name="Mattick J.S."/>
            <person name="Hume D.A."/>
            <person name="Kai C."/>
            <person name="Sasaki D."/>
            <person name="Tomaru Y."/>
            <person name="Fukuda S."/>
            <person name="Kanamori-Katayama M."/>
            <person name="Suzuki M."/>
            <person name="Aoki J."/>
            <person name="Arakawa T."/>
            <person name="Iida J."/>
            <person name="Imamura K."/>
            <person name="Itoh M."/>
            <person name="Kato T."/>
            <person name="Kawaji H."/>
            <person name="Kawagashira N."/>
            <person name="Kawashima T."/>
            <person name="Kojima M."/>
            <person name="Kondo S."/>
            <person name="Konno H."/>
            <person name="Nakano K."/>
            <person name="Ninomiya N."/>
            <person name="Nishio T."/>
            <person name="Okada M."/>
            <person name="Plessy C."/>
            <person name="Shibata K."/>
            <person name="Shiraki T."/>
            <person name="Suzuki S."/>
            <person name="Tagami M."/>
            <person name="Waki K."/>
            <person name="Watahiki A."/>
            <person name="Okamura-Oho Y."/>
            <person name="Suzuki H."/>
            <person name="Kawai J."/>
            <person name="Hayashizaki Y."/>
        </authorList>
    </citation>
    <scope>NUCLEOTIDE SEQUENCE [LARGE SCALE MRNA] (ISOFORM 1)</scope>
    <source>
        <strain>C57BL/6J</strain>
    </source>
</reference>
<reference key="2">
    <citation type="journal article" date="2009" name="PLoS Biol.">
        <title>Lineage-specific biology revealed by a finished genome assembly of the mouse.</title>
        <authorList>
            <person name="Church D.M."/>
            <person name="Goodstadt L."/>
            <person name="Hillier L.W."/>
            <person name="Zody M.C."/>
            <person name="Goldstein S."/>
            <person name="She X."/>
            <person name="Bult C.J."/>
            <person name="Agarwala R."/>
            <person name="Cherry J.L."/>
            <person name="DiCuccio M."/>
            <person name="Hlavina W."/>
            <person name="Kapustin Y."/>
            <person name="Meric P."/>
            <person name="Maglott D."/>
            <person name="Birtle Z."/>
            <person name="Marques A.C."/>
            <person name="Graves T."/>
            <person name="Zhou S."/>
            <person name="Teague B."/>
            <person name="Potamousis K."/>
            <person name="Churas C."/>
            <person name="Place M."/>
            <person name="Herschleb J."/>
            <person name="Runnheim R."/>
            <person name="Forrest D."/>
            <person name="Amos-Landgraf J."/>
            <person name="Schwartz D.C."/>
            <person name="Cheng Z."/>
            <person name="Lindblad-Toh K."/>
            <person name="Eichler E.E."/>
            <person name="Ponting C.P."/>
        </authorList>
    </citation>
    <scope>NUCLEOTIDE SEQUENCE [LARGE SCALE GENOMIC DNA]</scope>
    <source>
        <strain>C57BL/6J</strain>
    </source>
</reference>
<reference key="3">
    <citation type="journal article" date="2004" name="Genome Res.">
        <title>The status, quality, and expansion of the NIH full-length cDNA project: the Mammalian Gene Collection (MGC).</title>
        <authorList>
            <consortium name="The MGC Project Team"/>
        </authorList>
    </citation>
    <scope>NUCLEOTIDE SEQUENCE [LARGE SCALE MRNA] (ISOFORM 2)</scope>
    <source>
        <tissue>Testis</tissue>
    </source>
</reference>
<sequence>MEEVEAEEPQEFSHRQRLKAAVHYTVGCLCQEVTLNKQVNFSKQTIAAISEVTFRQCENFAKDLEMFARHAKRSTVTTEDVKLLARRNNSLLKYITEKNEEIAQLNLKGKAKKKRKPEDESRSSRESMAEELDGAEELQSES</sequence>
<comment type="function">
    <text evidence="1">DNA-binding component of the Fanconi anemia (FA) core complex. Required for the normal activation of the FA pathway, leading to monoubiquitination of the FANCI-FANCD2 complex in response to DNA damage, cellular resistance to DNA cross-linking drugs, and prevention of chromosomal breakage. In complex with CENPX (MHF heterodimer), crucial cofactor for FANCM in both binding and ATP-dependent remodeling of DNA. Stabilizes FANCM. In complex with CENPX and FANCM (but not other FANC proteins), rapidly recruited to blocked forks and promotes gene conversion at blocked replication forks. In complex with CENPT, CENPW and CENPX (CENP-T-W-S-X heterotetramer), involved in the formation of a functional kinetochore outer plate, which is essential for kinetochore-microtubule attachment and faithful mitotic progression. As a component of MHF and CENP-T-W-S-X complexes, binds DNA and bends it to form a nucleosome-like structure. DNA-binding function is fulfilled in the presence of CENPX, with the following preference for DNA substates: Holliday junction &gt; double-stranded &gt; splay arm &gt; single-stranded. Does not bind DNA on its own.</text>
</comment>
<comment type="subunit">
    <text evidence="1">Heterodimer with CENPX, sometimes called MHF; this interaction stabilizes both partners. MHF heterodimers can assemble to form tetrameric structures. MHF also coassemble with CENPT-CENPW heterodimers at centromeres to form the tetrameric CENP-T-W-S-X complex. Forms a discrete complex with FANCM and CENPX, called FANCM-MHF; this interaction, probably mediated by direct binding between CENPS and FANCM, leads to synergistic activation of double-stranded DNA binding and strongly stimulates FANCM-mediated DNA remodeling. Recruited by FANCM to the Fanconi anemia (FA) core complex, which consists of CENPS, CENPX, FANCA, FANCB, FANCC, FANCE, FANCF, FANCG, FANCL, FANCM, FAAP24 and FAAP100. The FA core complex associates with Bloom syndrome (BLM) complex, which consists of at least BLM, DNA topoisomerase 3-alpha (TOP3A), RMI1/BLAP75, RPA1/RPA70 and RPA2/RPA32. The super complex between FA and BLM is called BRAFT. Component of the CENPA-CAD complex, composed of CENPI, CENPK, CENPL, CENPO, CENPP, CENPQ, CENPR and CENPS. The CENPA-CAD complex is probably recruited on centromeres by the CENPA-NAC complex, at least composed of CENPA, CENPC, CENPH, CENPM, CENPN, CENPT and CENPU.</text>
</comment>
<comment type="subcellular location">
    <subcellularLocation>
        <location evidence="1">Nucleus</location>
    </subcellularLocation>
    <subcellularLocation>
        <location evidence="1">Chromosome</location>
        <location evidence="1">Centromere</location>
    </subcellularLocation>
    <subcellularLocation>
        <location evidence="1">Chromosome</location>
        <location evidence="1">Centromere</location>
        <location evidence="1">Kinetochore</location>
    </subcellularLocation>
    <text evidence="1">Assembly of CENPS and CENPX and its partner subunits CENPT and CENPW at centromeres occurs through a dynamic exchange mechanism. Although exchange is continuous in the cell cycle, de novo assembly starts principally during mid-late S phase and is complete by G2. CENPS is more stably bound at the kinetochore than CENPX. During S phase, rapidly recruited to DNA interstrand cross-links that block replication. Recruited to DNA damage sites about 20 minutes following UV irradiation, reaching a plateau after approximately 40 minutes.</text>
</comment>
<comment type="alternative products">
    <event type="alternative splicing"/>
    <isoform>
        <id>Q9D084-1</id>
        <name>1</name>
        <sequence type="displayed"/>
    </isoform>
    <isoform>
        <id>Q9D084-2</id>
        <name>2</name>
        <sequence type="described" ref="VSP_020435 VSP_020436"/>
    </isoform>
</comment>
<comment type="similarity">
    <text evidence="4">Belongs to the TAF9 family. CENP-S/MHF1 subfamily.</text>
</comment>
<comment type="sequence caution" evidence="4">
    <conflict type="frameshift">
        <sequence resource="EMBL-CDS" id="BAC25385"/>
    </conflict>
</comment>
<comment type="sequence caution" evidence="4">
    <conflict type="frameshift">
        <sequence resource="EMBL-CDS" id="BAC25387"/>
    </conflict>
</comment>
<proteinExistence type="evidence at transcript level"/>